<dbReference type="EMBL" id="AF525925">
    <property type="protein sequence ID" value="AAM88856.1"/>
    <property type="molecule type" value="mRNA"/>
</dbReference>
<dbReference type="EMBL" id="AK049061">
    <property type="protein sequence ID" value="BAC33530.1"/>
    <property type="molecule type" value="mRNA"/>
</dbReference>
<dbReference type="EMBL" id="AK170739">
    <property type="protein sequence ID" value="BAE41992.1"/>
    <property type="molecule type" value="mRNA"/>
</dbReference>
<dbReference type="EMBL" id="BC139366">
    <property type="protein sequence ID" value="AAI39367.1"/>
    <property type="molecule type" value="mRNA"/>
</dbReference>
<dbReference type="EMBL" id="AK129052">
    <property type="protein sequence ID" value="BAC97862.1"/>
    <property type="molecule type" value="mRNA"/>
</dbReference>
<dbReference type="CCDS" id="CCDS18846.1">
    <molecule id="Q8C7X2-2"/>
</dbReference>
<dbReference type="CCDS" id="CCDS38933.1">
    <molecule id="Q8C7X2-1"/>
</dbReference>
<dbReference type="RefSeq" id="NP_001034289.1">
    <molecule id="Q8C7X2-2"/>
    <property type="nucleotide sequence ID" value="NM_001039200.2"/>
</dbReference>
<dbReference type="RefSeq" id="NP_666269.2">
    <molecule id="Q8C7X2-1"/>
    <property type="nucleotide sequence ID" value="NM_146157.4"/>
</dbReference>
<dbReference type="SMR" id="Q8C7X2"/>
<dbReference type="BioGRID" id="231044">
    <property type="interactions" value="13"/>
</dbReference>
<dbReference type="ComplexPortal" id="CPX-5882">
    <property type="entry name" value="Endoplasmic reticulum membrane complex, EMC8 variant"/>
</dbReference>
<dbReference type="ComplexPortal" id="CPX-5883">
    <property type="entry name" value="Endoplasmic reticulum membrane complex, EMC9 variant"/>
</dbReference>
<dbReference type="FunCoup" id="Q8C7X2">
    <property type="interactions" value="4082"/>
</dbReference>
<dbReference type="IntAct" id="Q8C7X2">
    <property type="interactions" value="9"/>
</dbReference>
<dbReference type="STRING" id="10090.ENSMUSP00000137103"/>
<dbReference type="GlyConnect" id="2302">
    <property type="glycosylation" value="3 N-Linked glycans (1 site)"/>
</dbReference>
<dbReference type="GlyCosmos" id="Q8C7X2">
    <property type="glycosylation" value="1 site, 3 glycans"/>
</dbReference>
<dbReference type="GlyGen" id="Q8C7X2">
    <property type="glycosylation" value="2 sites, 4 N-linked glycans (1 site), 1 O-linked glycan (1 site)"/>
</dbReference>
<dbReference type="iPTMnet" id="Q8C7X2"/>
<dbReference type="PhosphoSitePlus" id="Q8C7X2"/>
<dbReference type="SwissPalm" id="Q8C7X2"/>
<dbReference type="jPOST" id="Q8C7X2"/>
<dbReference type="PaxDb" id="10090-ENSMUSP00000049034"/>
<dbReference type="PeptideAtlas" id="Q8C7X2"/>
<dbReference type="ProteomicsDB" id="275609">
    <molecule id="Q8C7X2-1"/>
</dbReference>
<dbReference type="ProteomicsDB" id="275610">
    <molecule id="Q8C7X2-2"/>
</dbReference>
<dbReference type="ProteomicsDB" id="275611">
    <molecule id="Q8C7X2-3"/>
</dbReference>
<dbReference type="Pumba" id="Q8C7X2"/>
<dbReference type="Antibodypedia" id="53149">
    <property type="antibodies" value="181 antibodies from 26 providers"/>
</dbReference>
<dbReference type="DNASU" id="230866"/>
<dbReference type="Ensembl" id="ENSMUST00000042096.15">
    <molecule id="Q8C7X2-2"/>
    <property type="protein sequence ID" value="ENSMUSP00000049034.8"/>
    <property type="gene ID" value="ENSMUSG00000078517.14"/>
</dbReference>
<dbReference type="Ensembl" id="ENSMUST00000179784.9">
    <molecule id="Q8C7X2-1"/>
    <property type="protein sequence ID" value="ENSMUSP00000137103.2"/>
    <property type="gene ID" value="ENSMUSG00000078517.14"/>
</dbReference>
<dbReference type="GeneID" id="230866"/>
<dbReference type="KEGG" id="mmu:230866"/>
<dbReference type="UCSC" id="uc008vmf.2">
    <molecule id="Q8C7X2-1"/>
    <property type="organism name" value="mouse"/>
</dbReference>
<dbReference type="UCSC" id="uc008vmh.2">
    <molecule id="Q8C7X2-2"/>
    <property type="organism name" value="mouse"/>
</dbReference>
<dbReference type="AGR" id="MGI:2443696"/>
<dbReference type="CTD" id="23065"/>
<dbReference type="MGI" id="MGI:2443696">
    <property type="gene designation" value="Emc1"/>
</dbReference>
<dbReference type="VEuPathDB" id="HostDB:ENSMUSG00000078517"/>
<dbReference type="eggNOG" id="KOG2103">
    <property type="taxonomic scope" value="Eukaryota"/>
</dbReference>
<dbReference type="GeneTree" id="ENSGT00390000002461"/>
<dbReference type="HOGENOM" id="CLU_005034_2_1_1"/>
<dbReference type="InParanoid" id="Q8C7X2"/>
<dbReference type="OMA" id="WSIMPLN"/>
<dbReference type="OrthoDB" id="28092at2759"/>
<dbReference type="PhylomeDB" id="Q8C7X2"/>
<dbReference type="TreeFam" id="TF313012"/>
<dbReference type="BioGRID-ORCS" id="230866">
    <property type="hits" value="19 hits in 78 CRISPR screens"/>
</dbReference>
<dbReference type="CD-CODE" id="CE726F99">
    <property type="entry name" value="Postsynaptic density"/>
</dbReference>
<dbReference type="ChiTaRS" id="Emc1">
    <property type="organism name" value="mouse"/>
</dbReference>
<dbReference type="PRO" id="PR:Q8C7X2"/>
<dbReference type="Proteomes" id="UP000000589">
    <property type="component" value="Chromosome 4"/>
</dbReference>
<dbReference type="RNAct" id="Q8C7X2">
    <property type="molecule type" value="protein"/>
</dbReference>
<dbReference type="Bgee" id="ENSMUSG00000078517">
    <property type="expression patterns" value="Expressed in otolith organ and 225 other cell types or tissues"/>
</dbReference>
<dbReference type="ExpressionAtlas" id="Q8C7X2">
    <property type="expression patterns" value="baseline and differential"/>
</dbReference>
<dbReference type="GO" id="GO:0072546">
    <property type="term" value="C:EMC complex"/>
    <property type="evidence" value="ECO:0000250"/>
    <property type="project" value="UniProtKB"/>
</dbReference>
<dbReference type="GO" id="GO:0005783">
    <property type="term" value="C:endoplasmic reticulum"/>
    <property type="evidence" value="ECO:0000314"/>
    <property type="project" value="MGI"/>
</dbReference>
<dbReference type="GO" id="GO:0005789">
    <property type="term" value="C:endoplasmic reticulum membrane"/>
    <property type="evidence" value="ECO:0000250"/>
    <property type="project" value="UniProtKB"/>
</dbReference>
<dbReference type="GO" id="GO:0016020">
    <property type="term" value="C:membrane"/>
    <property type="evidence" value="ECO:0000250"/>
    <property type="project" value="UniProtKB"/>
</dbReference>
<dbReference type="GO" id="GO:0032991">
    <property type="term" value="C:protein-containing complex"/>
    <property type="evidence" value="ECO:0000266"/>
    <property type="project" value="MGI"/>
</dbReference>
<dbReference type="GO" id="GO:0032977">
    <property type="term" value="F:membrane insertase activity"/>
    <property type="evidence" value="ECO:0007669"/>
    <property type="project" value="Ensembl"/>
</dbReference>
<dbReference type="GO" id="GO:0045050">
    <property type="term" value="P:protein insertion into ER membrane by stop-transfer membrane-anchor sequence"/>
    <property type="evidence" value="ECO:0000250"/>
    <property type="project" value="UniProtKB"/>
</dbReference>
<dbReference type="GO" id="GO:0071816">
    <property type="term" value="P:tail-anchored membrane protein insertion into ER membrane"/>
    <property type="evidence" value="ECO:0000250"/>
    <property type="project" value="UniProtKB"/>
</dbReference>
<dbReference type="FunFam" id="2.130.10.10:FF:000163">
    <property type="entry name" value="ER membrane protein complex subunit 1 isoform X2"/>
    <property type="match status" value="1"/>
</dbReference>
<dbReference type="Gene3D" id="2.130.10.10">
    <property type="entry name" value="YVTN repeat-like/Quinoprotein amine dehydrogenase"/>
    <property type="match status" value="1"/>
</dbReference>
<dbReference type="InterPro" id="IPR026895">
    <property type="entry name" value="EMC1"/>
</dbReference>
<dbReference type="InterPro" id="IPR011678">
    <property type="entry name" value="EMC1_C"/>
</dbReference>
<dbReference type="InterPro" id="IPR011047">
    <property type="entry name" value="Quinoprotein_ADH-like_sf"/>
</dbReference>
<dbReference type="InterPro" id="IPR015943">
    <property type="entry name" value="WD40/YVTN_repeat-like_dom_sf"/>
</dbReference>
<dbReference type="PANTHER" id="PTHR21573">
    <property type="entry name" value="ER MEMBRANE PROTEIN COMPLEX SUBUNIT 1"/>
    <property type="match status" value="1"/>
</dbReference>
<dbReference type="PANTHER" id="PTHR21573:SF0">
    <property type="entry name" value="ER MEMBRANE PROTEIN COMPLEX SUBUNIT 1"/>
    <property type="match status" value="1"/>
</dbReference>
<dbReference type="Pfam" id="PF25293">
    <property type="entry name" value="Beta-prop_EMC1_N"/>
    <property type="match status" value="1"/>
</dbReference>
<dbReference type="Pfam" id="PF07774">
    <property type="entry name" value="EMC1_C"/>
    <property type="match status" value="1"/>
</dbReference>
<dbReference type="SUPFAM" id="SSF50998">
    <property type="entry name" value="Quinoprotein alcohol dehydrogenase-like"/>
    <property type="match status" value="1"/>
</dbReference>
<keyword id="KW-0025">Alternative splicing</keyword>
<keyword id="KW-1015">Disulfide bond</keyword>
<keyword id="KW-0256">Endoplasmic reticulum</keyword>
<keyword id="KW-0325">Glycoprotein</keyword>
<keyword id="KW-0472">Membrane</keyword>
<keyword id="KW-1185">Reference proteome</keyword>
<keyword id="KW-0732">Signal</keyword>
<keyword id="KW-0812">Transmembrane</keyword>
<keyword id="KW-1133">Transmembrane helix</keyword>
<sequence length="997" mass="111605">MAVAVASGFWIWAAVLLVPAAAVYEDQVGKFDWRQQYVGKIKFASLEFSPGSKKLVVATEKNVIAALNSRTGEILWRHVDKGTAEGAVDAMLVHGQDAITVSNGGRLMRSWETNIGGLNWEITLDTGSFQALGLVGLQESVRYIAVLKKTTLTLHHLSSGHLKWVEHLPESDSILYQMVYSYGSGVVWALGIVPFSHVNIVKFNVEDGEIVQQVRVWTPWLQHLTGACGVVDEAVLVCPDPSSHSLHTLALETEWELRQIPLQSPDLEFGSGFQPQVLPTQPSPVAPSRAQFFLQLSPSHYALLHYHHGAVTLLKNFPQATLVSFATTGEKTVAAVMTCRTEVQKPVSAGDGSVASFPETSGAQDSLACFNQTYTINLYLVETGRRLLDTSISFSLEQKGTRPEQLYIQVFLKKDDSVGYRALVQTQDHLQLFLQQLAGKVVLWSREESLAEVVCLEMVDLPLTGAQAELEGEFGKKAAIQDGLLGMFLKRLSSQLILLQAWTSHLWKMFYDARKPRSQIKNEINIDTLARDEFNLQKMMVTVTASGKLFGIESSSGTILWKQYLPNVKPDSSFKLMVQRTTAHFPHPPQCTLLVKDKETGMSSLFVFNPIFGKWSQVAPPVLKRPILQSLLLPVMDQDYAKVLLLVDDEYKVTAFPATRNVLRQLHELAPSIFFYLVDAEQGRLSGYQLRKDLTTELSWELTIPPEVQRVVKVKGKRSSEHVHSQGRVMGDRSVLYKSLNPNLLAVVTESTDVHHERTFIGIFLIDGVTGRIIHSSVQKKARGPVHLVHSENWVVYQYWNSKARRNELTALELYEGTEQYNATAFSSLDRPQLPQVLQQSYIFPSSISAMEATITERGITSRHLLIGLPSGAILSLPKALLDPRRPEIPTEQSREENLIPYSPDVQVHAERFINYNQTVSRMRGIYTAPSGLESTCLVVAYGLDIYQTRVYPSKQFDVLKDDYDYVLISSVLFGLVFATMITKRLAQVKLLNRAWR</sequence>
<comment type="function">
    <text evidence="1">Part of the endoplasmic reticulum membrane protein complex (EMC) that enables the energy-independent insertion into endoplasmic reticulum membranes of newly synthesized membrane proteins. Preferentially accommodates proteins with transmembrane domains that are weakly hydrophobic or contain destabilizing features such as charged and aromatic residues. Involved in the cotranslational insertion of multi-pass membrane proteins in which stop-transfer membrane-anchor sequences become ER membrane spanning helices. It is also required for the post-translational insertion of tail-anchored/TA proteins in endoplasmic reticulum membranes. By mediating the proper cotranslational insertion of N-terminal transmembrane domains in an N-exo topology, with translocated N-terminus in the lumen of the ER, controls the topology of multi-pass membrane proteins like the G protein-coupled receptors. By regulating the insertion of various proteins in membranes, it is indirectly involved in many cellular processes.</text>
</comment>
<comment type="subunit">
    <text evidence="1">Component of the ER membrane protein complex (EMC).</text>
</comment>
<comment type="subcellular location">
    <subcellularLocation>
        <location evidence="1">Endoplasmic reticulum membrane</location>
        <topology evidence="1">Single-pass type I membrane protein</topology>
    </subcellularLocation>
</comment>
<comment type="alternative products">
    <event type="alternative splicing"/>
    <isoform>
        <id>Q8C7X2-1</id>
        <name>1</name>
        <sequence type="displayed"/>
    </isoform>
    <isoform>
        <id>Q8C7X2-2</id>
        <name>2</name>
        <sequence type="described" ref="VSP_020331"/>
    </isoform>
    <isoform>
        <id>Q8C7X2-3</id>
        <name>3</name>
        <sequence type="described" ref="VSP_020330"/>
    </isoform>
</comment>
<comment type="similarity">
    <text evidence="5">Belongs to the EMC1 family.</text>
</comment>
<organism>
    <name type="scientific">Mus musculus</name>
    <name type="common">Mouse</name>
    <dbReference type="NCBI Taxonomy" id="10090"/>
    <lineage>
        <taxon>Eukaryota</taxon>
        <taxon>Metazoa</taxon>
        <taxon>Chordata</taxon>
        <taxon>Craniata</taxon>
        <taxon>Vertebrata</taxon>
        <taxon>Euteleostomi</taxon>
        <taxon>Mammalia</taxon>
        <taxon>Eutheria</taxon>
        <taxon>Euarchontoglires</taxon>
        <taxon>Glires</taxon>
        <taxon>Rodentia</taxon>
        <taxon>Myomorpha</taxon>
        <taxon>Muroidea</taxon>
        <taxon>Muridae</taxon>
        <taxon>Murinae</taxon>
        <taxon>Mus</taxon>
        <taxon>Mus</taxon>
    </lineage>
</organism>
<protein>
    <recommendedName>
        <fullName>ER membrane protein complex subunit 1</fullName>
    </recommendedName>
</protein>
<gene>
    <name type="primary">Emc1</name>
    <name type="synonym">Kiaa0090</name>
</gene>
<evidence type="ECO:0000250" key="1">
    <source>
        <dbReference type="UniProtKB" id="Q8N766"/>
    </source>
</evidence>
<evidence type="ECO:0000269" key="2">
    <source>
    </source>
</evidence>
<evidence type="ECO:0000303" key="3">
    <source>
    </source>
</evidence>
<evidence type="ECO:0000303" key="4">
    <source ref="1"/>
</evidence>
<evidence type="ECO:0000305" key="5"/>
<proteinExistence type="evidence at protein level"/>
<accession>Q8C7X2</accession>
<accession>B2RTJ5</accession>
<accession>Q3TCG4</accession>
<accession>Q6ZQJ4</accession>
<accession>Q8K3W8</accession>
<feature type="signal peptide" evidence="1">
    <location>
        <begin position="1"/>
        <end position="23"/>
    </location>
</feature>
<feature type="chain" id="PRO_0000248598" description="ER membrane protein complex subunit 1">
    <location>
        <begin position="24"/>
        <end position="997"/>
    </location>
</feature>
<feature type="topological domain" description="Lumenal" evidence="1">
    <location>
        <begin position="24"/>
        <end position="966"/>
    </location>
</feature>
<feature type="transmembrane region" description="Helical" evidence="1">
    <location>
        <begin position="967"/>
        <end position="987"/>
    </location>
</feature>
<feature type="topological domain" description="Cytoplasmic" evidence="1">
    <location>
        <begin position="988"/>
        <end position="997"/>
    </location>
</feature>
<feature type="glycosylation site" description="N-linked (GlcNAc...) asparagine" evidence="2">
    <location>
        <position position="917"/>
    </location>
</feature>
<feature type="disulfide bond" evidence="1">
    <location>
        <begin position="228"/>
        <end position="238"/>
    </location>
</feature>
<feature type="disulfide bond" evidence="1">
    <location>
        <begin position="339"/>
        <end position="369"/>
    </location>
</feature>
<feature type="splice variant" id="VSP_020330" description="In isoform 3." evidence="4">
    <location>
        <begin position="1"/>
        <end position="635"/>
    </location>
</feature>
<feature type="splice variant" id="VSP_020331" description="In isoform 2." evidence="3">
    <location>
        <begin position="479"/>
        <end position="481"/>
    </location>
</feature>
<feature type="sequence conflict" description="In Ref. 4; BAC97862." evidence="5" ref="4">
    <original>A</original>
    <variation>V</variation>
    <location>
        <position position="20"/>
    </location>
</feature>
<name>EMC1_MOUSE</name>
<reference key="1">
    <citation type="submission" date="2002-07" db="EMBL/GenBank/DDBJ databases">
        <authorList>
            <person name="Chen X.G."/>
            <person name="Li Y."/>
        </authorList>
    </citation>
    <scope>NUCLEOTIDE SEQUENCE [MRNA] (ISOFORM 3)</scope>
    <source>
        <strain>BALB/cJ</strain>
        <tissue>Heart</tissue>
    </source>
</reference>
<reference key="2">
    <citation type="journal article" date="2005" name="Science">
        <title>The transcriptional landscape of the mammalian genome.</title>
        <authorList>
            <person name="Carninci P."/>
            <person name="Kasukawa T."/>
            <person name="Katayama S."/>
            <person name="Gough J."/>
            <person name="Frith M.C."/>
            <person name="Maeda N."/>
            <person name="Oyama R."/>
            <person name="Ravasi T."/>
            <person name="Lenhard B."/>
            <person name="Wells C."/>
            <person name="Kodzius R."/>
            <person name="Shimokawa K."/>
            <person name="Bajic V.B."/>
            <person name="Brenner S.E."/>
            <person name="Batalov S."/>
            <person name="Forrest A.R."/>
            <person name="Zavolan M."/>
            <person name="Davis M.J."/>
            <person name="Wilming L.G."/>
            <person name="Aidinis V."/>
            <person name="Allen J.E."/>
            <person name="Ambesi-Impiombato A."/>
            <person name="Apweiler R."/>
            <person name="Aturaliya R.N."/>
            <person name="Bailey T.L."/>
            <person name="Bansal M."/>
            <person name="Baxter L."/>
            <person name="Beisel K.W."/>
            <person name="Bersano T."/>
            <person name="Bono H."/>
            <person name="Chalk A.M."/>
            <person name="Chiu K.P."/>
            <person name="Choudhary V."/>
            <person name="Christoffels A."/>
            <person name="Clutterbuck D.R."/>
            <person name="Crowe M.L."/>
            <person name="Dalla E."/>
            <person name="Dalrymple B.P."/>
            <person name="de Bono B."/>
            <person name="Della Gatta G."/>
            <person name="di Bernardo D."/>
            <person name="Down T."/>
            <person name="Engstrom P."/>
            <person name="Fagiolini M."/>
            <person name="Faulkner G."/>
            <person name="Fletcher C.F."/>
            <person name="Fukushima T."/>
            <person name="Furuno M."/>
            <person name="Futaki S."/>
            <person name="Gariboldi M."/>
            <person name="Georgii-Hemming P."/>
            <person name="Gingeras T.R."/>
            <person name="Gojobori T."/>
            <person name="Green R.E."/>
            <person name="Gustincich S."/>
            <person name="Harbers M."/>
            <person name="Hayashi Y."/>
            <person name="Hensch T.K."/>
            <person name="Hirokawa N."/>
            <person name="Hill D."/>
            <person name="Huminiecki L."/>
            <person name="Iacono M."/>
            <person name="Ikeo K."/>
            <person name="Iwama A."/>
            <person name="Ishikawa T."/>
            <person name="Jakt M."/>
            <person name="Kanapin A."/>
            <person name="Katoh M."/>
            <person name="Kawasawa Y."/>
            <person name="Kelso J."/>
            <person name="Kitamura H."/>
            <person name="Kitano H."/>
            <person name="Kollias G."/>
            <person name="Krishnan S.P."/>
            <person name="Kruger A."/>
            <person name="Kummerfeld S.K."/>
            <person name="Kurochkin I.V."/>
            <person name="Lareau L.F."/>
            <person name="Lazarevic D."/>
            <person name="Lipovich L."/>
            <person name="Liu J."/>
            <person name="Liuni S."/>
            <person name="McWilliam S."/>
            <person name="Madan Babu M."/>
            <person name="Madera M."/>
            <person name="Marchionni L."/>
            <person name="Matsuda H."/>
            <person name="Matsuzawa S."/>
            <person name="Miki H."/>
            <person name="Mignone F."/>
            <person name="Miyake S."/>
            <person name="Morris K."/>
            <person name="Mottagui-Tabar S."/>
            <person name="Mulder N."/>
            <person name="Nakano N."/>
            <person name="Nakauchi H."/>
            <person name="Ng P."/>
            <person name="Nilsson R."/>
            <person name="Nishiguchi S."/>
            <person name="Nishikawa S."/>
            <person name="Nori F."/>
            <person name="Ohara O."/>
            <person name="Okazaki Y."/>
            <person name="Orlando V."/>
            <person name="Pang K.C."/>
            <person name="Pavan W.J."/>
            <person name="Pavesi G."/>
            <person name="Pesole G."/>
            <person name="Petrovsky N."/>
            <person name="Piazza S."/>
            <person name="Reed J."/>
            <person name="Reid J.F."/>
            <person name="Ring B.Z."/>
            <person name="Ringwald M."/>
            <person name="Rost B."/>
            <person name="Ruan Y."/>
            <person name="Salzberg S.L."/>
            <person name="Sandelin A."/>
            <person name="Schneider C."/>
            <person name="Schoenbach C."/>
            <person name="Sekiguchi K."/>
            <person name="Semple C.A."/>
            <person name="Seno S."/>
            <person name="Sessa L."/>
            <person name="Sheng Y."/>
            <person name="Shibata Y."/>
            <person name="Shimada H."/>
            <person name="Shimada K."/>
            <person name="Silva D."/>
            <person name="Sinclair B."/>
            <person name="Sperling S."/>
            <person name="Stupka E."/>
            <person name="Sugiura K."/>
            <person name="Sultana R."/>
            <person name="Takenaka Y."/>
            <person name="Taki K."/>
            <person name="Tammoja K."/>
            <person name="Tan S.L."/>
            <person name="Tang S."/>
            <person name="Taylor M.S."/>
            <person name="Tegner J."/>
            <person name="Teichmann S.A."/>
            <person name="Ueda H.R."/>
            <person name="van Nimwegen E."/>
            <person name="Verardo R."/>
            <person name="Wei C.L."/>
            <person name="Yagi K."/>
            <person name="Yamanishi H."/>
            <person name="Zabarovsky E."/>
            <person name="Zhu S."/>
            <person name="Zimmer A."/>
            <person name="Hide W."/>
            <person name="Bult C."/>
            <person name="Grimmond S.M."/>
            <person name="Teasdale R.D."/>
            <person name="Liu E.T."/>
            <person name="Brusic V."/>
            <person name="Quackenbush J."/>
            <person name="Wahlestedt C."/>
            <person name="Mattick J.S."/>
            <person name="Hume D.A."/>
            <person name="Kai C."/>
            <person name="Sasaki D."/>
            <person name="Tomaru Y."/>
            <person name="Fukuda S."/>
            <person name="Kanamori-Katayama M."/>
            <person name="Suzuki M."/>
            <person name="Aoki J."/>
            <person name="Arakawa T."/>
            <person name="Iida J."/>
            <person name="Imamura K."/>
            <person name="Itoh M."/>
            <person name="Kato T."/>
            <person name="Kawaji H."/>
            <person name="Kawagashira N."/>
            <person name="Kawashima T."/>
            <person name="Kojima M."/>
            <person name="Kondo S."/>
            <person name="Konno H."/>
            <person name="Nakano K."/>
            <person name="Ninomiya N."/>
            <person name="Nishio T."/>
            <person name="Okada M."/>
            <person name="Plessy C."/>
            <person name="Shibata K."/>
            <person name="Shiraki T."/>
            <person name="Suzuki S."/>
            <person name="Tagami M."/>
            <person name="Waki K."/>
            <person name="Watahiki A."/>
            <person name="Okamura-Oho Y."/>
            <person name="Suzuki H."/>
            <person name="Kawai J."/>
            <person name="Hayashizaki Y."/>
        </authorList>
    </citation>
    <scope>NUCLEOTIDE SEQUENCE [LARGE SCALE MRNA] (ISOFORM 1)</scope>
    <scope>NUCLEOTIDE SEQUENCE [LARGE SCALE MRNA] OF 1-896 (ISOFORM 2)</scope>
    <source>
        <strain>C57BL/6J</strain>
        <strain>NOD</strain>
        <tissue>Cerebellum</tissue>
    </source>
</reference>
<reference key="3">
    <citation type="journal article" date="2004" name="Genome Res.">
        <title>The status, quality, and expansion of the NIH full-length cDNA project: the Mammalian Gene Collection (MGC).</title>
        <authorList>
            <consortium name="The MGC Project Team"/>
        </authorList>
    </citation>
    <scope>NUCLEOTIDE SEQUENCE [LARGE SCALE MRNA] (ISOFORM 1)</scope>
    <source>
        <tissue>Brain</tissue>
    </source>
</reference>
<reference key="4">
    <citation type="journal article" date="2003" name="DNA Res.">
        <title>Prediction of the coding sequences of mouse homologues of KIAA gene: III. The complete nucleotide sequences of 500 mouse KIAA-homologous cDNAs identified by screening of terminal sequences of cDNA clones randomly sampled from size-fractionated libraries.</title>
        <authorList>
            <person name="Okazaki N."/>
            <person name="Kikuno R."/>
            <person name="Ohara R."/>
            <person name="Inamoto S."/>
            <person name="Koseki H."/>
            <person name="Hiraoka S."/>
            <person name="Saga Y."/>
            <person name="Nagase T."/>
            <person name="Ohara O."/>
            <person name="Koga H."/>
        </authorList>
    </citation>
    <scope>NUCLEOTIDE SEQUENCE [LARGE SCALE MRNA] OF 6-997 (ISOFORM 1)</scope>
    <source>
        <tissue>Brain</tissue>
    </source>
</reference>
<reference key="5">
    <citation type="journal article" date="2009" name="Nat. Biotechnol.">
        <title>Mass-spectrometric identification and relative quantification of N-linked cell surface glycoproteins.</title>
        <authorList>
            <person name="Wollscheid B."/>
            <person name="Bausch-Fluck D."/>
            <person name="Henderson C."/>
            <person name="O'Brien R."/>
            <person name="Bibel M."/>
            <person name="Schiess R."/>
            <person name="Aebersold R."/>
            <person name="Watts J.D."/>
        </authorList>
    </citation>
    <scope>GLYCOSYLATION [LARGE SCALE ANALYSIS] AT ASN-917</scope>
</reference>
<reference key="6">
    <citation type="journal article" date="2010" name="Cell">
        <title>A tissue-specific atlas of mouse protein phosphorylation and expression.</title>
        <authorList>
            <person name="Huttlin E.L."/>
            <person name="Jedrychowski M.P."/>
            <person name="Elias J.E."/>
            <person name="Goswami T."/>
            <person name="Rad R."/>
            <person name="Beausoleil S.A."/>
            <person name="Villen J."/>
            <person name="Haas W."/>
            <person name="Sowa M.E."/>
            <person name="Gygi S.P."/>
        </authorList>
    </citation>
    <scope>IDENTIFICATION BY MASS SPECTROMETRY [LARGE SCALE ANALYSIS]</scope>
    <source>
        <tissue>Brain</tissue>
        <tissue>Brown adipose tissue</tissue>
        <tissue>Heart</tissue>
        <tissue>Kidney</tissue>
        <tissue>Liver</tissue>
        <tissue>Lung</tissue>
        <tissue>Pancreas</tissue>
        <tissue>Spleen</tissue>
        <tissue>Testis</tissue>
    </source>
</reference>